<feature type="chain" id="PRO_1000126717" description="Large ribosomal subunit protein bL31">
    <location>
        <begin position="1"/>
        <end position="70"/>
    </location>
</feature>
<feature type="binding site" evidence="1">
    <location>
        <position position="16"/>
    </location>
    <ligand>
        <name>Zn(2+)</name>
        <dbReference type="ChEBI" id="CHEBI:29105"/>
    </ligand>
</feature>
<feature type="binding site" evidence="1">
    <location>
        <position position="18"/>
    </location>
    <ligand>
        <name>Zn(2+)</name>
        <dbReference type="ChEBI" id="CHEBI:29105"/>
    </ligand>
</feature>
<feature type="binding site" evidence="1">
    <location>
        <position position="37"/>
    </location>
    <ligand>
        <name>Zn(2+)</name>
        <dbReference type="ChEBI" id="CHEBI:29105"/>
    </ligand>
</feature>
<feature type="binding site" evidence="1">
    <location>
        <position position="40"/>
    </location>
    <ligand>
        <name>Zn(2+)</name>
        <dbReference type="ChEBI" id="CHEBI:29105"/>
    </ligand>
</feature>
<gene>
    <name evidence="1" type="primary">rpmE</name>
    <name type="ordered locus">SEN3886</name>
</gene>
<comment type="function">
    <text evidence="1">Binds the 23S rRNA.</text>
</comment>
<comment type="cofactor">
    <cofactor evidence="1">
        <name>Zn(2+)</name>
        <dbReference type="ChEBI" id="CHEBI:29105"/>
    </cofactor>
    <text evidence="1">Binds 1 zinc ion per subunit.</text>
</comment>
<comment type="subunit">
    <text evidence="1">Part of the 50S ribosomal subunit.</text>
</comment>
<comment type="similarity">
    <text evidence="1">Belongs to the bacterial ribosomal protein bL31 family. Type A subfamily.</text>
</comment>
<keyword id="KW-0479">Metal-binding</keyword>
<keyword id="KW-0687">Ribonucleoprotein</keyword>
<keyword id="KW-0689">Ribosomal protein</keyword>
<keyword id="KW-0694">RNA-binding</keyword>
<keyword id="KW-0699">rRNA-binding</keyword>
<keyword id="KW-0862">Zinc</keyword>
<organism>
    <name type="scientific">Salmonella enteritidis PT4 (strain P125109)</name>
    <dbReference type="NCBI Taxonomy" id="550537"/>
    <lineage>
        <taxon>Bacteria</taxon>
        <taxon>Pseudomonadati</taxon>
        <taxon>Pseudomonadota</taxon>
        <taxon>Gammaproteobacteria</taxon>
        <taxon>Enterobacterales</taxon>
        <taxon>Enterobacteriaceae</taxon>
        <taxon>Salmonella</taxon>
    </lineage>
</organism>
<name>RL31_SALEP</name>
<accession>B5QXM5</accession>
<protein>
    <recommendedName>
        <fullName evidence="1">Large ribosomal subunit protein bL31</fullName>
    </recommendedName>
    <alternativeName>
        <fullName evidence="2">50S ribosomal protein L31</fullName>
    </alternativeName>
</protein>
<evidence type="ECO:0000255" key="1">
    <source>
        <dbReference type="HAMAP-Rule" id="MF_00501"/>
    </source>
</evidence>
<evidence type="ECO:0000305" key="2"/>
<proteinExistence type="inferred from homology"/>
<sequence>MKKGIHPNYVEITATCSCGNVIKTHSTVGHDLNLDVCGKCHPFFTGKQRVVDTGGRVERFNKRFSIPGSK</sequence>
<reference key="1">
    <citation type="journal article" date="2008" name="Genome Res.">
        <title>Comparative genome analysis of Salmonella enteritidis PT4 and Salmonella gallinarum 287/91 provides insights into evolutionary and host adaptation pathways.</title>
        <authorList>
            <person name="Thomson N.R."/>
            <person name="Clayton D.J."/>
            <person name="Windhorst D."/>
            <person name="Vernikos G."/>
            <person name="Davidson S."/>
            <person name="Churcher C."/>
            <person name="Quail M.A."/>
            <person name="Stevens M."/>
            <person name="Jones M.A."/>
            <person name="Watson M."/>
            <person name="Barron A."/>
            <person name="Layton A."/>
            <person name="Pickard D."/>
            <person name="Kingsley R.A."/>
            <person name="Bignell A."/>
            <person name="Clark L."/>
            <person name="Harris B."/>
            <person name="Ormond D."/>
            <person name="Abdellah Z."/>
            <person name="Brooks K."/>
            <person name="Cherevach I."/>
            <person name="Chillingworth T."/>
            <person name="Woodward J."/>
            <person name="Norberczak H."/>
            <person name="Lord A."/>
            <person name="Arrowsmith C."/>
            <person name="Jagels K."/>
            <person name="Moule S."/>
            <person name="Mungall K."/>
            <person name="Saunders M."/>
            <person name="Whitehead S."/>
            <person name="Chabalgoity J.A."/>
            <person name="Maskell D."/>
            <person name="Humphreys T."/>
            <person name="Roberts M."/>
            <person name="Barrow P.A."/>
            <person name="Dougan G."/>
            <person name="Parkhill J."/>
        </authorList>
    </citation>
    <scope>NUCLEOTIDE SEQUENCE [LARGE SCALE GENOMIC DNA]</scope>
    <source>
        <strain>P125109</strain>
    </source>
</reference>
<dbReference type="EMBL" id="AM933172">
    <property type="protein sequence ID" value="CAR35460.1"/>
    <property type="molecule type" value="Genomic_DNA"/>
</dbReference>
<dbReference type="RefSeq" id="WP_000715284.1">
    <property type="nucleotide sequence ID" value="NC_011294.1"/>
</dbReference>
<dbReference type="SMR" id="B5QXM5"/>
<dbReference type="GeneID" id="66758349"/>
<dbReference type="KEGG" id="set:SEN3886"/>
<dbReference type="HOGENOM" id="CLU_114306_4_3_6"/>
<dbReference type="Proteomes" id="UP000000613">
    <property type="component" value="Chromosome"/>
</dbReference>
<dbReference type="GO" id="GO:1990904">
    <property type="term" value="C:ribonucleoprotein complex"/>
    <property type="evidence" value="ECO:0007669"/>
    <property type="project" value="UniProtKB-KW"/>
</dbReference>
<dbReference type="GO" id="GO:0005840">
    <property type="term" value="C:ribosome"/>
    <property type="evidence" value="ECO:0007669"/>
    <property type="project" value="UniProtKB-KW"/>
</dbReference>
<dbReference type="GO" id="GO:0046872">
    <property type="term" value="F:metal ion binding"/>
    <property type="evidence" value="ECO:0007669"/>
    <property type="project" value="UniProtKB-KW"/>
</dbReference>
<dbReference type="GO" id="GO:0019843">
    <property type="term" value="F:rRNA binding"/>
    <property type="evidence" value="ECO:0007669"/>
    <property type="project" value="UniProtKB-KW"/>
</dbReference>
<dbReference type="GO" id="GO:0003735">
    <property type="term" value="F:structural constituent of ribosome"/>
    <property type="evidence" value="ECO:0007669"/>
    <property type="project" value="InterPro"/>
</dbReference>
<dbReference type="GO" id="GO:0006412">
    <property type="term" value="P:translation"/>
    <property type="evidence" value="ECO:0007669"/>
    <property type="project" value="UniProtKB-UniRule"/>
</dbReference>
<dbReference type="FunFam" id="4.10.830.30:FF:000001">
    <property type="entry name" value="50S ribosomal protein L31"/>
    <property type="match status" value="1"/>
</dbReference>
<dbReference type="Gene3D" id="4.10.830.30">
    <property type="entry name" value="Ribosomal protein L31"/>
    <property type="match status" value="1"/>
</dbReference>
<dbReference type="HAMAP" id="MF_00501">
    <property type="entry name" value="Ribosomal_bL31_1"/>
    <property type="match status" value="1"/>
</dbReference>
<dbReference type="InterPro" id="IPR034704">
    <property type="entry name" value="Ribosomal_bL28/bL31-like_sf"/>
</dbReference>
<dbReference type="InterPro" id="IPR002150">
    <property type="entry name" value="Ribosomal_bL31"/>
</dbReference>
<dbReference type="InterPro" id="IPR027491">
    <property type="entry name" value="Ribosomal_bL31_A"/>
</dbReference>
<dbReference type="InterPro" id="IPR042105">
    <property type="entry name" value="Ribosomal_bL31_sf"/>
</dbReference>
<dbReference type="NCBIfam" id="TIGR00105">
    <property type="entry name" value="L31"/>
    <property type="match status" value="1"/>
</dbReference>
<dbReference type="NCBIfam" id="NF000612">
    <property type="entry name" value="PRK00019.1"/>
    <property type="match status" value="1"/>
</dbReference>
<dbReference type="NCBIfam" id="NF001809">
    <property type="entry name" value="PRK00528.1"/>
    <property type="match status" value="1"/>
</dbReference>
<dbReference type="PANTHER" id="PTHR33280">
    <property type="entry name" value="50S RIBOSOMAL PROTEIN L31, CHLOROPLASTIC"/>
    <property type="match status" value="1"/>
</dbReference>
<dbReference type="PANTHER" id="PTHR33280:SF6">
    <property type="entry name" value="LARGE RIBOSOMAL SUBUNIT PROTEIN BL31A"/>
    <property type="match status" value="1"/>
</dbReference>
<dbReference type="Pfam" id="PF01197">
    <property type="entry name" value="Ribosomal_L31"/>
    <property type="match status" value="1"/>
</dbReference>
<dbReference type="PRINTS" id="PR01249">
    <property type="entry name" value="RIBOSOMALL31"/>
</dbReference>
<dbReference type="SUPFAM" id="SSF143800">
    <property type="entry name" value="L28p-like"/>
    <property type="match status" value="1"/>
</dbReference>
<dbReference type="PROSITE" id="PS01143">
    <property type="entry name" value="RIBOSOMAL_L31"/>
    <property type="match status" value="1"/>
</dbReference>